<dbReference type="EC" id="2.8.4.3" evidence="1"/>
<dbReference type="EMBL" id="AP006627">
    <property type="protein sequence ID" value="BAD64725.1"/>
    <property type="molecule type" value="Genomic_DNA"/>
</dbReference>
<dbReference type="RefSeq" id="WP_011247033.1">
    <property type="nucleotide sequence ID" value="NC_006582.1"/>
</dbReference>
<dbReference type="SMR" id="Q5WFY0"/>
<dbReference type="STRING" id="66692.ABC2190"/>
<dbReference type="KEGG" id="bcl:ABC2190"/>
<dbReference type="eggNOG" id="COG0621">
    <property type="taxonomic scope" value="Bacteria"/>
</dbReference>
<dbReference type="HOGENOM" id="CLU_018697_2_0_9"/>
<dbReference type="OrthoDB" id="9805215at2"/>
<dbReference type="Proteomes" id="UP000001168">
    <property type="component" value="Chromosome"/>
</dbReference>
<dbReference type="GO" id="GO:0005829">
    <property type="term" value="C:cytosol"/>
    <property type="evidence" value="ECO:0007669"/>
    <property type="project" value="TreeGrafter"/>
</dbReference>
<dbReference type="GO" id="GO:0051539">
    <property type="term" value="F:4 iron, 4 sulfur cluster binding"/>
    <property type="evidence" value="ECO:0007669"/>
    <property type="project" value="UniProtKB-UniRule"/>
</dbReference>
<dbReference type="GO" id="GO:0046872">
    <property type="term" value="F:metal ion binding"/>
    <property type="evidence" value="ECO:0007669"/>
    <property type="project" value="UniProtKB-KW"/>
</dbReference>
<dbReference type="GO" id="GO:0035597">
    <property type="term" value="F:N6-isopentenyladenosine methylthiotransferase activity"/>
    <property type="evidence" value="ECO:0007669"/>
    <property type="project" value="TreeGrafter"/>
</dbReference>
<dbReference type="CDD" id="cd01335">
    <property type="entry name" value="Radical_SAM"/>
    <property type="match status" value="1"/>
</dbReference>
<dbReference type="FunFam" id="3.40.50.12160:FF:000006">
    <property type="entry name" value="tRNA-2-methylthio-N(6)-dimethylallyladenosine synthase"/>
    <property type="match status" value="1"/>
</dbReference>
<dbReference type="FunFam" id="3.80.30.20:FF:000001">
    <property type="entry name" value="tRNA-2-methylthio-N(6)-dimethylallyladenosine synthase 2"/>
    <property type="match status" value="1"/>
</dbReference>
<dbReference type="Gene3D" id="3.40.50.12160">
    <property type="entry name" value="Methylthiotransferase, N-terminal domain"/>
    <property type="match status" value="1"/>
</dbReference>
<dbReference type="Gene3D" id="3.80.30.20">
    <property type="entry name" value="tm_1862 like domain"/>
    <property type="match status" value="1"/>
</dbReference>
<dbReference type="HAMAP" id="MF_01864">
    <property type="entry name" value="tRNA_metthiotr_MiaB"/>
    <property type="match status" value="1"/>
</dbReference>
<dbReference type="InterPro" id="IPR006638">
    <property type="entry name" value="Elp3/MiaA/NifB-like_rSAM"/>
</dbReference>
<dbReference type="InterPro" id="IPR005839">
    <property type="entry name" value="Methylthiotransferase"/>
</dbReference>
<dbReference type="InterPro" id="IPR020612">
    <property type="entry name" value="Methylthiotransferase_CS"/>
</dbReference>
<dbReference type="InterPro" id="IPR013848">
    <property type="entry name" value="Methylthiotransferase_N"/>
</dbReference>
<dbReference type="InterPro" id="IPR038135">
    <property type="entry name" value="Methylthiotransferase_N_sf"/>
</dbReference>
<dbReference type="InterPro" id="IPR006463">
    <property type="entry name" value="MiaB_methiolase"/>
</dbReference>
<dbReference type="InterPro" id="IPR007197">
    <property type="entry name" value="rSAM"/>
</dbReference>
<dbReference type="InterPro" id="IPR023404">
    <property type="entry name" value="rSAM_horseshoe"/>
</dbReference>
<dbReference type="InterPro" id="IPR002792">
    <property type="entry name" value="TRAM_dom"/>
</dbReference>
<dbReference type="NCBIfam" id="TIGR01574">
    <property type="entry name" value="miaB-methiolase"/>
    <property type="match status" value="1"/>
</dbReference>
<dbReference type="NCBIfam" id="TIGR00089">
    <property type="entry name" value="MiaB/RimO family radical SAM methylthiotransferase"/>
    <property type="match status" value="1"/>
</dbReference>
<dbReference type="PANTHER" id="PTHR43020">
    <property type="entry name" value="CDK5 REGULATORY SUBUNIT-ASSOCIATED PROTEIN 1"/>
    <property type="match status" value="1"/>
</dbReference>
<dbReference type="PANTHER" id="PTHR43020:SF2">
    <property type="entry name" value="MITOCHONDRIAL TRNA METHYLTHIOTRANSFERASE CDK5RAP1"/>
    <property type="match status" value="1"/>
</dbReference>
<dbReference type="Pfam" id="PF04055">
    <property type="entry name" value="Radical_SAM"/>
    <property type="match status" value="1"/>
</dbReference>
<dbReference type="Pfam" id="PF01938">
    <property type="entry name" value="TRAM"/>
    <property type="match status" value="1"/>
</dbReference>
<dbReference type="Pfam" id="PF00919">
    <property type="entry name" value="UPF0004"/>
    <property type="match status" value="1"/>
</dbReference>
<dbReference type="SFLD" id="SFLDF00273">
    <property type="entry name" value="(dimethylallyl)adenosine_tRNA"/>
    <property type="match status" value="1"/>
</dbReference>
<dbReference type="SFLD" id="SFLDG01082">
    <property type="entry name" value="B12-binding_domain_containing"/>
    <property type="match status" value="1"/>
</dbReference>
<dbReference type="SFLD" id="SFLDS00029">
    <property type="entry name" value="Radical_SAM"/>
    <property type="match status" value="1"/>
</dbReference>
<dbReference type="SMART" id="SM00729">
    <property type="entry name" value="Elp3"/>
    <property type="match status" value="1"/>
</dbReference>
<dbReference type="SUPFAM" id="SSF102114">
    <property type="entry name" value="Radical SAM enzymes"/>
    <property type="match status" value="1"/>
</dbReference>
<dbReference type="PROSITE" id="PS51449">
    <property type="entry name" value="MTTASE_N"/>
    <property type="match status" value="1"/>
</dbReference>
<dbReference type="PROSITE" id="PS01278">
    <property type="entry name" value="MTTASE_RADICAL"/>
    <property type="match status" value="1"/>
</dbReference>
<dbReference type="PROSITE" id="PS51918">
    <property type="entry name" value="RADICAL_SAM"/>
    <property type="match status" value="1"/>
</dbReference>
<dbReference type="PROSITE" id="PS50926">
    <property type="entry name" value="TRAM"/>
    <property type="match status" value="1"/>
</dbReference>
<proteinExistence type="inferred from homology"/>
<gene>
    <name evidence="1" type="primary">miaB</name>
    <name type="ordered locus">ABC2190</name>
</gene>
<organism>
    <name type="scientific">Shouchella clausii (strain KSM-K16)</name>
    <name type="common">Alkalihalobacillus clausii</name>
    <dbReference type="NCBI Taxonomy" id="66692"/>
    <lineage>
        <taxon>Bacteria</taxon>
        <taxon>Bacillati</taxon>
        <taxon>Bacillota</taxon>
        <taxon>Bacilli</taxon>
        <taxon>Bacillales</taxon>
        <taxon>Bacillaceae</taxon>
        <taxon>Shouchella</taxon>
    </lineage>
</organism>
<comment type="function">
    <text evidence="1">Catalyzes the methylthiolation of N6-(dimethylallyl)adenosine (i(6)A), leading to the formation of 2-methylthio-N6-(dimethylallyl)adenosine (ms(2)i(6)A) at position 37 in tRNAs that read codons beginning with uridine.</text>
</comment>
<comment type="catalytic activity">
    <reaction evidence="1">
        <text>N(6)-dimethylallyladenosine(37) in tRNA + (sulfur carrier)-SH + AH2 + 2 S-adenosyl-L-methionine = 2-methylsulfanyl-N(6)-dimethylallyladenosine(37) in tRNA + (sulfur carrier)-H + 5'-deoxyadenosine + L-methionine + A + S-adenosyl-L-homocysteine + 2 H(+)</text>
        <dbReference type="Rhea" id="RHEA:37067"/>
        <dbReference type="Rhea" id="RHEA-COMP:10375"/>
        <dbReference type="Rhea" id="RHEA-COMP:10376"/>
        <dbReference type="Rhea" id="RHEA-COMP:14737"/>
        <dbReference type="Rhea" id="RHEA-COMP:14739"/>
        <dbReference type="ChEBI" id="CHEBI:13193"/>
        <dbReference type="ChEBI" id="CHEBI:15378"/>
        <dbReference type="ChEBI" id="CHEBI:17319"/>
        <dbReference type="ChEBI" id="CHEBI:17499"/>
        <dbReference type="ChEBI" id="CHEBI:29917"/>
        <dbReference type="ChEBI" id="CHEBI:57844"/>
        <dbReference type="ChEBI" id="CHEBI:57856"/>
        <dbReference type="ChEBI" id="CHEBI:59789"/>
        <dbReference type="ChEBI" id="CHEBI:64428"/>
        <dbReference type="ChEBI" id="CHEBI:74415"/>
        <dbReference type="ChEBI" id="CHEBI:74417"/>
        <dbReference type="EC" id="2.8.4.3"/>
    </reaction>
</comment>
<comment type="cofactor">
    <cofactor evidence="1">
        <name>[4Fe-4S] cluster</name>
        <dbReference type="ChEBI" id="CHEBI:49883"/>
    </cofactor>
    <text evidence="1">Binds 2 [4Fe-4S] clusters. One cluster is coordinated with 3 cysteines and an exchangeable S-adenosyl-L-methionine.</text>
</comment>
<comment type="subunit">
    <text evidence="1">Monomer.</text>
</comment>
<comment type="subcellular location">
    <subcellularLocation>
        <location evidence="1">Cytoplasm</location>
    </subcellularLocation>
</comment>
<comment type="similarity">
    <text evidence="1">Belongs to the methylthiotransferase family. MiaB subfamily.</text>
</comment>
<protein>
    <recommendedName>
        <fullName evidence="1">tRNA-2-methylthio-N(6)-dimethylallyladenosine synthase</fullName>
        <ecNumber evidence="1">2.8.4.3</ecNumber>
    </recommendedName>
    <alternativeName>
        <fullName evidence="1">(Dimethylallyl)adenosine tRNA methylthiotransferase MiaB</fullName>
    </alternativeName>
    <alternativeName>
        <fullName evidence="1">tRNA-i(6)A37 methylthiotransferase</fullName>
    </alternativeName>
</protein>
<accession>Q5WFY0</accession>
<reference key="1">
    <citation type="submission" date="2003-10" db="EMBL/GenBank/DDBJ databases">
        <title>The complete genome sequence of the alkaliphilic Bacillus clausii KSM-K16.</title>
        <authorList>
            <person name="Takaki Y."/>
            <person name="Kageyama Y."/>
            <person name="Shimamura S."/>
            <person name="Suzuki H."/>
            <person name="Nishi S."/>
            <person name="Hatada Y."/>
            <person name="Kawai S."/>
            <person name="Ito S."/>
            <person name="Horikoshi K."/>
        </authorList>
    </citation>
    <scope>NUCLEOTIDE SEQUENCE [LARGE SCALE GENOMIC DNA]</scope>
    <source>
        <strain>KSM-K16</strain>
    </source>
</reference>
<sequence length="520" mass="59281">MSDQNKTKDYSKYFDFSDARVVSEDDEKKIIKIKGREITIYDQPNYRAGRKRKREDVQVLRPENLIPEEVANLGAGKKFLIRTYGCQMNVHDSENMSGLLLGMGFEETTETEEADIILLNTCAIRENAENKVFGEIGNLKPLKLEKPELIIGVCGCMSQEESVVGKIMEKHQHIDLIFGTHNIHRLPHLLRDAIFGKEMVIEVWSKEGDIVENMPRSRKNKTQAWVNIMYGCDKFCTYCIVPYTRGKERSRLPEDIIAEVRDLARQGYKEITLLGQNVNAYGKDLPGSYRLGDLMNEIHKIDIPRVRFTTSHPRDFDDHLIEVLAQGGNLVEHIHLPVQHGNSDILKLMGRKYTREQYITLANKIKQAIPNASFTTDLIVGFPNETEEQFQDMLSLVEEIQFDAAYTYIYSPREGTPAARMEDNVPMSVKKERLARLNALVNDISNKRNLDYQDKIVEVLVEGESKKNTDVLAGRTRTNRLVNFVGPKSAIGEIVYVKITEAKTWSLDGEIVSAPEVKAQ</sequence>
<feature type="chain" id="PRO_0000374133" description="tRNA-2-methylthio-N(6)-dimethylallyladenosine synthase">
    <location>
        <begin position="1"/>
        <end position="520"/>
    </location>
</feature>
<feature type="domain" description="MTTase N-terminal" evidence="1">
    <location>
        <begin position="77"/>
        <end position="195"/>
    </location>
</feature>
<feature type="domain" description="Radical SAM core" evidence="2">
    <location>
        <begin position="218"/>
        <end position="448"/>
    </location>
</feature>
<feature type="domain" description="TRAM" evidence="1">
    <location>
        <begin position="450"/>
        <end position="513"/>
    </location>
</feature>
<feature type="binding site" evidence="1">
    <location>
        <position position="86"/>
    </location>
    <ligand>
        <name>[4Fe-4S] cluster</name>
        <dbReference type="ChEBI" id="CHEBI:49883"/>
        <label>1</label>
    </ligand>
</feature>
<feature type="binding site" evidence="1">
    <location>
        <position position="122"/>
    </location>
    <ligand>
        <name>[4Fe-4S] cluster</name>
        <dbReference type="ChEBI" id="CHEBI:49883"/>
        <label>1</label>
    </ligand>
</feature>
<feature type="binding site" evidence="1">
    <location>
        <position position="156"/>
    </location>
    <ligand>
        <name>[4Fe-4S] cluster</name>
        <dbReference type="ChEBI" id="CHEBI:49883"/>
        <label>1</label>
    </ligand>
</feature>
<feature type="binding site" evidence="1">
    <location>
        <position position="232"/>
    </location>
    <ligand>
        <name>[4Fe-4S] cluster</name>
        <dbReference type="ChEBI" id="CHEBI:49883"/>
        <label>2</label>
        <note>4Fe-4S-S-AdoMet</note>
    </ligand>
</feature>
<feature type="binding site" evidence="1">
    <location>
        <position position="236"/>
    </location>
    <ligand>
        <name>[4Fe-4S] cluster</name>
        <dbReference type="ChEBI" id="CHEBI:49883"/>
        <label>2</label>
        <note>4Fe-4S-S-AdoMet</note>
    </ligand>
</feature>
<feature type="binding site" evidence="1">
    <location>
        <position position="239"/>
    </location>
    <ligand>
        <name>[4Fe-4S] cluster</name>
        <dbReference type="ChEBI" id="CHEBI:49883"/>
        <label>2</label>
        <note>4Fe-4S-S-AdoMet</note>
    </ligand>
</feature>
<name>MIAB_SHOC1</name>
<evidence type="ECO:0000255" key="1">
    <source>
        <dbReference type="HAMAP-Rule" id="MF_01864"/>
    </source>
</evidence>
<evidence type="ECO:0000255" key="2">
    <source>
        <dbReference type="PROSITE-ProRule" id="PRU01266"/>
    </source>
</evidence>
<keyword id="KW-0004">4Fe-4S</keyword>
<keyword id="KW-0963">Cytoplasm</keyword>
<keyword id="KW-0408">Iron</keyword>
<keyword id="KW-0411">Iron-sulfur</keyword>
<keyword id="KW-0479">Metal-binding</keyword>
<keyword id="KW-1185">Reference proteome</keyword>
<keyword id="KW-0949">S-adenosyl-L-methionine</keyword>
<keyword id="KW-0808">Transferase</keyword>
<keyword id="KW-0819">tRNA processing</keyword>